<gene>
    <name type="primary">RH42</name>
    <name type="synonym">RCF1</name>
    <name type="ordered locus">At1g20920</name>
    <name type="ORF">F9H16.10</name>
</gene>
<name>RH42_ARATH</name>
<evidence type="ECO:0000255" key="1"/>
<evidence type="ECO:0000255" key="2">
    <source>
        <dbReference type="PROSITE-ProRule" id="PRU00541"/>
    </source>
</evidence>
<evidence type="ECO:0000255" key="3">
    <source>
        <dbReference type="PROSITE-ProRule" id="PRU00542"/>
    </source>
</evidence>
<evidence type="ECO:0000256" key="4">
    <source>
        <dbReference type="SAM" id="MobiDB-lite"/>
    </source>
</evidence>
<evidence type="ECO:0000269" key="5">
    <source>
    </source>
</evidence>
<evidence type="ECO:0000305" key="6"/>
<evidence type="ECO:0007744" key="7">
    <source>
    </source>
</evidence>
<organism>
    <name type="scientific">Arabidopsis thaliana</name>
    <name type="common">Mouse-ear cress</name>
    <dbReference type="NCBI Taxonomy" id="3702"/>
    <lineage>
        <taxon>Eukaryota</taxon>
        <taxon>Viridiplantae</taxon>
        <taxon>Streptophyta</taxon>
        <taxon>Embryophyta</taxon>
        <taxon>Tracheophyta</taxon>
        <taxon>Spermatophyta</taxon>
        <taxon>Magnoliopsida</taxon>
        <taxon>eudicotyledons</taxon>
        <taxon>Gunneridae</taxon>
        <taxon>Pentapetalae</taxon>
        <taxon>rosids</taxon>
        <taxon>malvids</taxon>
        <taxon>Brassicales</taxon>
        <taxon>Brassicaceae</taxon>
        <taxon>Camelineae</taxon>
        <taxon>Arabidopsis</taxon>
    </lineage>
</organism>
<reference key="1">
    <citation type="journal article" date="2000" name="Nature">
        <title>Sequence and analysis of chromosome 1 of the plant Arabidopsis thaliana.</title>
        <authorList>
            <person name="Theologis A."/>
            <person name="Ecker J.R."/>
            <person name="Palm C.J."/>
            <person name="Federspiel N.A."/>
            <person name="Kaul S."/>
            <person name="White O."/>
            <person name="Alonso J."/>
            <person name="Altafi H."/>
            <person name="Araujo R."/>
            <person name="Bowman C.L."/>
            <person name="Brooks S.Y."/>
            <person name="Buehler E."/>
            <person name="Chan A."/>
            <person name="Chao Q."/>
            <person name="Chen H."/>
            <person name="Cheuk R.F."/>
            <person name="Chin C.W."/>
            <person name="Chung M.K."/>
            <person name="Conn L."/>
            <person name="Conway A.B."/>
            <person name="Conway A.R."/>
            <person name="Creasy T.H."/>
            <person name="Dewar K."/>
            <person name="Dunn P."/>
            <person name="Etgu P."/>
            <person name="Feldblyum T.V."/>
            <person name="Feng J.-D."/>
            <person name="Fong B."/>
            <person name="Fujii C.Y."/>
            <person name="Gill J.E."/>
            <person name="Goldsmith A.D."/>
            <person name="Haas B."/>
            <person name="Hansen N.F."/>
            <person name="Hughes B."/>
            <person name="Huizar L."/>
            <person name="Hunter J.L."/>
            <person name="Jenkins J."/>
            <person name="Johnson-Hopson C."/>
            <person name="Khan S."/>
            <person name="Khaykin E."/>
            <person name="Kim C.J."/>
            <person name="Koo H.L."/>
            <person name="Kremenetskaia I."/>
            <person name="Kurtz D.B."/>
            <person name="Kwan A."/>
            <person name="Lam B."/>
            <person name="Langin-Hooper S."/>
            <person name="Lee A."/>
            <person name="Lee J.M."/>
            <person name="Lenz C.A."/>
            <person name="Li J.H."/>
            <person name="Li Y.-P."/>
            <person name="Lin X."/>
            <person name="Liu S.X."/>
            <person name="Liu Z.A."/>
            <person name="Luros J.S."/>
            <person name="Maiti R."/>
            <person name="Marziali A."/>
            <person name="Militscher J."/>
            <person name="Miranda M."/>
            <person name="Nguyen M."/>
            <person name="Nierman W.C."/>
            <person name="Osborne B.I."/>
            <person name="Pai G."/>
            <person name="Peterson J."/>
            <person name="Pham P.K."/>
            <person name="Rizzo M."/>
            <person name="Rooney T."/>
            <person name="Rowley D."/>
            <person name="Sakano H."/>
            <person name="Salzberg S.L."/>
            <person name="Schwartz J.R."/>
            <person name="Shinn P."/>
            <person name="Southwick A.M."/>
            <person name="Sun H."/>
            <person name="Tallon L.J."/>
            <person name="Tambunga G."/>
            <person name="Toriumi M.J."/>
            <person name="Town C.D."/>
            <person name="Utterback T."/>
            <person name="Van Aken S."/>
            <person name="Vaysberg M."/>
            <person name="Vysotskaia V.S."/>
            <person name="Walker M."/>
            <person name="Wu D."/>
            <person name="Yu G."/>
            <person name="Fraser C.M."/>
            <person name="Venter J.C."/>
            <person name="Davis R.W."/>
        </authorList>
    </citation>
    <scope>NUCLEOTIDE SEQUENCE [LARGE SCALE GENOMIC DNA]</scope>
    <source>
        <strain>cv. Columbia</strain>
    </source>
</reference>
<reference key="2">
    <citation type="journal article" date="2017" name="Plant J.">
        <title>Araport11: a complete reannotation of the Arabidopsis thaliana reference genome.</title>
        <authorList>
            <person name="Cheng C.Y."/>
            <person name="Krishnakumar V."/>
            <person name="Chan A.P."/>
            <person name="Thibaud-Nissen F."/>
            <person name="Schobel S."/>
            <person name="Town C.D."/>
        </authorList>
    </citation>
    <scope>GENOME REANNOTATION</scope>
    <source>
        <strain>cv. Columbia</strain>
    </source>
</reference>
<reference key="3">
    <citation type="journal article" date="2003" name="Science">
        <title>Empirical analysis of transcriptional activity in the Arabidopsis genome.</title>
        <authorList>
            <person name="Yamada K."/>
            <person name="Lim J."/>
            <person name="Dale J.M."/>
            <person name="Chen H."/>
            <person name="Shinn P."/>
            <person name="Palm C.J."/>
            <person name="Southwick A.M."/>
            <person name="Wu H.C."/>
            <person name="Kim C.J."/>
            <person name="Nguyen M."/>
            <person name="Pham P.K."/>
            <person name="Cheuk R.F."/>
            <person name="Karlin-Newmann G."/>
            <person name="Liu S.X."/>
            <person name="Lam B."/>
            <person name="Sakano H."/>
            <person name="Wu T."/>
            <person name="Yu G."/>
            <person name="Miranda M."/>
            <person name="Quach H.L."/>
            <person name="Tripp M."/>
            <person name="Chang C.H."/>
            <person name="Lee J.M."/>
            <person name="Toriumi M.J."/>
            <person name="Chan M.M."/>
            <person name="Tang C.C."/>
            <person name="Onodera C.S."/>
            <person name="Deng J.M."/>
            <person name="Akiyama K."/>
            <person name="Ansari Y."/>
            <person name="Arakawa T."/>
            <person name="Banh J."/>
            <person name="Banno F."/>
            <person name="Bowser L."/>
            <person name="Brooks S.Y."/>
            <person name="Carninci P."/>
            <person name="Chao Q."/>
            <person name="Choy N."/>
            <person name="Enju A."/>
            <person name="Goldsmith A.D."/>
            <person name="Gurjal M."/>
            <person name="Hansen N.F."/>
            <person name="Hayashizaki Y."/>
            <person name="Johnson-Hopson C."/>
            <person name="Hsuan V.W."/>
            <person name="Iida K."/>
            <person name="Karnes M."/>
            <person name="Khan S."/>
            <person name="Koesema E."/>
            <person name="Ishida J."/>
            <person name="Jiang P.X."/>
            <person name="Jones T."/>
            <person name="Kawai J."/>
            <person name="Kamiya A."/>
            <person name="Meyers C."/>
            <person name="Nakajima M."/>
            <person name="Narusaka M."/>
            <person name="Seki M."/>
            <person name="Sakurai T."/>
            <person name="Satou M."/>
            <person name="Tamse R."/>
            <person name="Vaysberg M."/>
            <person name="Wallender E.K."/>
            <person name="Wong C."/>
            <person name="Yamamura Y."/>
            <person name="Yuan S."/>
            <person name="Shinozaki K."/>
            <person name="Davis R.W."/>
            <person name="Theologis A."/>
            <person name="Ecker J.R."/>
        </authorList>
    </citation>
    <scope>NUCLEOTIDE SEQUENCE [LARGE SCALE MRNA] OF 605-1166</scope>
    <source>
        <strain>cv. Columbia</strain>
    </source>
</reference>
<reference key="4">
    <citation type="journal article" date="2004" name="Plant Biotechnol. J.">
        <title>DEAD-box RNA helicases in Arabidopsis thaliana: establishing a link between quantitative expression, gene structure and evolution of a family of genes.</title>
        <authorList>
            <person name="Mingam A."/>
            <person name="Toffano-Nioche C."/>
            <person name="Brunaud V."/>
            <person name="Boudet N."/>
            <person name="Kreis M."/>
            <person name="Lecharny A."/>
        </authorList>
    </citation>
    <scope>GENE FAMILY</scope>
    <scope>NOMENCLATURE</scope>
</reference>
<reference key="5">
    <citation type="journal article" date="2009" name="Plant Physiol.">
        <title>Large-scale Arabidopsis phosphoproteome profiling reveals novel chloroplast kinase substrates and phosphorylation networks.</title>
        <authorList>
            <person name="Reiland S."/>
            <person name="Messerli G."/>
            <person name="Baerenfaller K."/>
            <person name="Gerrits B."/>
            <person name="Endler A."/>
            <person name="Grossmann J."/>
            <person name="Gruissem W."/>
            <person name="Baginsky S."/>
        </authorList>
    </citation>
    <scope>PHOSPHORYLATION [LARGE SCALE ANALYSIS] AT SER-210 AND SER-324</scope>
    <scope>IDENTIFICATION BY MASS SPECTROMETRY [LARGE SCALE ANALYSIS]</scope>
</reference>
<reference key="6">
    <citation type="journal article" date="2013" name="PLoS ONE">
        <title>Genome-wide comparative in silico analysis of the RNA helicase gene family in Zea mays and Glycine max: a comparison with Arabidopsis and Oryza sativa.</title>
        <authorList>
            <person name="Xu R."/>
            <person name="Zhang S."/>
            <person name="Huang J."/>
            <person name="Zheng C."/>
        </authorList>
    </citation>
    <scope>GENE FAMILY</scope>
</reference>
<reference key="7">
    <citation type="journal article" date="2013" name="Plant Cell">
        <title>A DEAD box RNA helicase is critical for pre-mRNA splicing, cold-responsive gene regulation, and cold tolerance in Arabidopsis.</title>
        <authorList>
            <person name="Guan Q."/>
            <person name="Wu J."/>
            <person name="Zhang Y."/>
            <person name="Jiang C."/>
            <person name="Liu R."/>
            <person name="Chai C."/>
            <person name="Zhu J."/>
        </authorList>
    </citation>
    <scope>FUNCTION</scope>
    <scope>MUTAGENESIS OF GLU-687 AND GLY-808</scope>
    <scope>SUBCELLULAR LOCATION</scope>
    <scope>INDUCTION BY COLD</scope>
</reference>
<dbReference type="EC" id="3.6.4.13"/>
<dbReference type="EMBL" id="AC007369">
    <property type="protein sequence ID" value="AAD30599.1"/>
    <property type="molecule type" value="Genomic_DNA"/>
</dbReference>
<dbReference type="EMBL" id="CP002684">
    <property type="protein sequence ID" value="AEE30040.1"/>
    <property type="molecule type" value="Genomic_DNA"/>
</dbReference>
<dbReference type="EMBL" id="CP002684">
    <property type="protein sequence ID" value="AEE30041.1"/>
    <property type="molecule type" value="Genomic_DNA"/>
</dbReference>
<dbReference type="EMBL" id="CP002684">
    <property type="protein sequence ID" value="ANM59668.1"/>
    <property type="molecule type" value="Genomic_DNA"/>
</dbReference>
<dbReference type="EMBL" id="CP002684">
    <property type="protein sequence ID" value="ANM59669.1"/>
    <property type="molecule type" value="Genomic_DNA"/>
</dbReference>
<dbReference type="EMBL" id="CP002684">
    <property type="protein sequence ID" value="ANM59670.1"/>
    <property type="molecule type" value="Genomic_DNA"/>
</dbReference>
<dbReference type="EMBL" id="CP002684">
    <property type="protein sequence ID" value="ANM59671.1"/>
    <property type="molecule type" value="Genomic_DNA"/>
</dbReference>
<dbReference type="EMBL" id="CP002684">
    <property type="protein sequence ID" value="ANM59672.1"/>
    <property type="molecule type" value="Genomic_DNA"/>
</dbReference>
<dbReference type="EMBL" id="BT002030">
    <property type="protein sequence ID" value="AAN72041.1"/>
    <property type="status" value="ALT_INIT"/>
    <property type="molecule type" value="mRNA"/>
</dbReference>
<dbReference type="PIR" id="H86341">
    <property type="entry name" value="H86341"/>
</dbReference>
<dbReference type="RefSeq" id="NP_001077571.1">
    <molecule id="Q8H0U8-2"/>
    <property type="nucleotide sequence ID" value="NM_001084102.1"/>
</dbReference>
<dbReference type="RefSeq" id="NP_001322011.1">
    <molecule id="Q8H0U8-1"/>
    <property type="nucleotide sequence ID" value="NM_001332479.1"/>
</dbReference>
<dbReference type="RefSeq" id="NP_001322012.1">
    <molecule id="Q8H0U8-1"/>
    <property type="nucleotide sequence ID" value="NM_001332478.1"/>
</dbReference>
<dbReference type="RefSeq" id="NP_001322013.1">
    <molecule id="Q8H0U8-1"/>
    <property type="nucleotide sequence ID" value="NM_001332481.1"/>
</dbReference>
<dbReference type="RefSeq" id="NP_001322014.1">
    <molecule id="Q8H0U8-1"/>
    <property type="nucleotide sequence ID" value="NM_001332480.1"/>
</dbReference>
<dbReference type="RefSeq" id="NP_001322015.1">
    <molecule id="Q8H0U8-1"/>
    <property type="nucleotide sequence ID" value="NM_001332477.1"/>
</dbReference>
<dbReference type="RefSeq" id="NP_173516.1">
    <molecule id="Q8H0U8-1"/>
    <property type="nucleotide sequence ID" value="NM_101945.4"/>
</dbReference>
<dbReference type="SMR" id="Q8H0U8"/>
<dbReference type="BioGRID" id="23924">
    <property type="interactions" value="2"/>
</dbReference>
<dbReference type="FunCoup" id="Q8H0U8">
    <property type="interactions" value="4101"/>
</dbReference>
<dbReference type="STRING" id="3702.Q8H0U8"/>
<dbReference type="iPTMnet" id="Q8H0U8"/>
<dbReference type="PaxDb" id="3702-AT1G20920.1"/>
<dbReference type="ProteomicsDB" id="236246">
    <molecule id="Q8H0U8-1"/>
</dbReference>
<dbReference type="EnsemblPlants" id="AT1G20920.1">
    <molecule id="Q8H0U8-1"/>
    <property type="protein sequence ID" value="AT1G20920.1"/>
    <property type="gene ID" value="AT1G20920"/>
</dbReference>
<dbReference type="EnsemblPlants" id="AT1G20920.2">
    <molecule id="Q8H0U8-2"/>
    <property type="protein sequence ID" value="AT1G20920.2"/>
    <property type="gene ID" value="AT1G20920"/>
</dbReference>
<dbReference type="EnsemblPlants" id="AT1G20920.3">
    <molecule id="Q8H0U8-1"/>
    <property type="protein sequence ID" value="AT1G20920.3"/>
    <property type="gene ID" value="AT1G20920"/>
</dbReference>
<dbReference type="EnsemblPlants" id="AT1G20920.4">
    <molecule id="Q8H0U8-1"/>
    <property type="protein sequence ID" value="AT1G20920.4"/>
    <property type="gene ID" value="AT1G20920"/>
</dbReference>
<dbReference type="EnsemblPlants" id="AT1G20920.5">
    <molecule id="Q8H0U8-1"/>
    <property type="protein sequence ID" value="AT1G20920.5"/>
    <property type="gene ID" value="AT1G20920"/>
</dbReference>
<dbReference type="EnsemblPlants" id="AT1G20920.6">
    <molecule id="Q8H0U8-1"/>
    <property type="protein sequence ID" value="AT1G20920.6"/>
    <property type="gene ID" value="AT1G20920"/>
</dbReference>
<dbReference type="EnsemblPlants" id="AT1G20920.7">
    <molecule id="Q8H0U8-1"/>
    <property type="protein sequence ID" value="AT1G20920.7"/>
    <property type="gene ID" value="AT1G20920"/>
</dbReference>
<dbReference type="GeneID" id="838685"/>
<dbReference type="Gramene" id="AT1G20920.1">
    <molecule id="Q8H0U8-1"/>
    <property type="protein sequence ID" value="AT1G20920.1"/>
    <property type="gene ID" value="AT1G20920"/>
</dbReference>
<dbReference type="Gramene" id="AT1G20920.2">
    <molecule id="Q8H0U8-2"/>
    <property type="protein sequence ID" value="AT1G20920.2"/>
    <property type="gene ID" value="AT1G20920"/>
</dbReference>
<dbReference type="Gramene" id="AT1G20920.3">
    <molecule id="Q8H0U8-1"/>
    <property type="protein sequence ID" value="AT1G20920.3"/>
    <property type="gene ID" value="AT1G20920"/>
</dbReference>
<dbReference type="Gramene" id="AT1G20920.4">
    <molecule id="Q8H0U8-1"/>
    <property type="protein sequence ID" value="AT1G20920.4"/>
    <property type="gene ID" value="AT1G20920"/>
</dbReference>
<dbReference type="Gramene" id="AT1G20920.5">
    <molecule id="Q8H0U8-1"/>
    <property type="protein sequence ID" value="AT1G20920.5"/>
    <property type="gene ID" value="AT1G20920"/>
</dbReference>
<dbReference type="Gramene" id="AT1G20920.6">
    <molecule id="Q8H0U8-1"/>
    <property type="protein sequence ID" value="AT1G20920.6"/>
    <property type="gene ID" value="AT1G20920"/>
</dbReference>
<dbReference type="Gramene" id="AT1G20920.7">
    <molecule id="Q8H0U8-1"/>
    <property type="protein sequence ID" value="AT1G20920.7"/>
    <property type="gene ID" value="AT1G20920"/>
</dbReference>
<dbReference type="KEGG" id="ath:AT1G20920"/>
<dbReference type="Araport" id="AT1G20920"/>
<dbReference type="TAIR" id="AT1G20920">
    <property type="gene designation" value="RCF1"/>
</dbReference>
<dbReference type="eggNOG" id="KOG0334">
    <property type="taxonomic scope" value="Eukaryota"/>
</dbReference>
<dbReference type="InParanoid" id="Q8H0U8"/>
<dbReference type="OMA" id="QLPMKKW"/>
<dbReference type="PhylomeDB" id="Q8H0U8"/>
<dbReference type="CD-CODE" id="4299E36E">
    <property type="entry name" value="Nucleolus"/>
</dbReference>
<dbReference type="PRO" id="PR:Q8H0U8"/>
<dbReference type="Proteomes" id="UP000006548">
    <property type="component" value="Chromosome 1"/>
</dbReference>
<dbReference type="ExpressionAtlas" id="Q8H0U8">
    <property type="expression patterns" value="baseline and differential"/>
</dbReference>
<dbReference type="GO" id="GO:0005634">
    <property type="term" value="C:nucleus"/>
    <property type="evidence" value="ECO:0007669"/>
    <property type="project" value="UniProtKB-SubCell"/>
</dbReference>
<dbReference type="GO" id="GO:0005524">
    <property type="term" value="F:ATP binding"/>
    <property type="evidence" value="ECO:0007669"/>
    <property type="project" value="UniProtKB-KW"/>
</dbReference>
<dbReference type="GO" id="GO:0016887">
    <property type="term" value="F:ATP hydrolysis activity"/>
    <property type="evidence" value="ECO:0007669"/>
    <property type="project" value="RHEA"/>
</dbReference>
<dbReference type="GO" id="GO:0003723">
    <property type="term" value="F:RNA binding"/>
    <property type="evidence" value="ECO:0007669"/>
    <property type="project" value="UniProtKB-KW"/>
</dbReference>
<dbReference type="GO" id="GO:0003724">
    <property type="term" value="F:RNA helicase activity"/>
    <property type="evidence" value="ECO:0007669"/>
    <property type="project" value="UniProtKB-EC"/>
</dbReference>
<dbReference type="CDD" id="cd17953">
    <property type="entry name" value="DEADc_DDX46"/>
    <property type="match status" value="1"/>
</dbReference>
<dbReference type="CDD" id="cd22475">
    <property type="entry name" value="KH-I_AtRH42_like"/>
    <property type="match status" value="1"/>
</dbReference>
<dbReference type="CDD" id="cd18787">
    <property type="entry name" value="SF2_C_DEAD"/>
    <property type="match status" value="1"/>
</dbReference>
<dbReference type="FunFam" id="3.40.50.300:FF:000079">
    <property type="entry name" value="probable ATP-dependent RNA helicase DDX17"/>
    <property type="match status" value="1"/>
</dbReference>
<dbReference type="Gene3D" id="3.40.50.300">
    <property type="entry name" value="P-loop containing nucleotide triphosphate hydrolases"/>
    <property type="match status" value="2"/>
</dbReference>
<dbReference type="InterPro" id="IPR011545">
    <property type="entry name" value="DEAD/DEAH_box_helicase_dom"/>
</dbReference>
<dbReference type="InterPro" id="IPR014001">
    <property type="entry name" value="Helicase_ATP-bd"/>
</dbReference>
<dbReference type="InterPro" id="IPR001650">
    <property type="entry name" value="Helicase_C-like"/>
</dbReference>
<dbReference type="InterPro" id="IPR027417">
    <property type="entry name" value="P-loop_NTPase"/>
</dbReference>
<dbReference type="InterPro" id="IPR056149">
    <property type="entry name" value="PRP5/DDX46/KHDC4_KH"/>
</dbReference>
<dbReference type="InterPro" id="IPR000629">
    <property type="entry name" value="RNA-helicase_DEAD-box_CS"/>
</dbReference>
<dbReference type="InterPro" id="IPR014014">
    <property type="entry name" value="RNA_helicase_DEAD_Q_motif"/>
</dbReference>
<dbReference type="PANTHER" id="PTHR47958">
    <property type="entry name" value="ATP-DEPENDENT RNA HELICASE DBP3"/>
    <property type="match status" value="1"/>
</dbReference>
<dbReference type="Pfam" id="PF00270">
    <property type="entry name" value="DEAD"/>
    <property type="match status" value="1"/>
</dbReference>
<dbReference type="Pfam" id="PF00271">
    <property type="entry name" value="Helicase_C"/>
    <property type="match status" value="1"/>
</dbReference>
<dbReference type="Pfam" id="PF23469">
    <property type="entry name" value="KH_12"/>
    <property type="match status" value="1"/>
</dbReference>
<dbReference type="SMART" id="SM00487">
    <property type="entry name" value="DEXDc"/>
    <property type="match status" value="1"/>
</dbReference>
<dbReference type="SMART" id="SM00490">
    <property type="entry name" value="HELICc"/>
    <property type="match status" value="1"/>
</dbReference>
<dbReference type="SUPFAM" id="SSF52540">
    <property type="entry name" value="P-loop containing nucleoside triphosphate hydrolases"/>
    <property type="match status" value="1"/>
</dbReference>
<dbReference type="PROSITE" id="PS00039">
    <property type="entry name" value="DEAD_ATP_HELICASE"/>
    <property type="match status" value="1"/>
</dbReference>
<dbReference type="PROSITE" id="PS51192">
    <property type="entry name" value="HELICASE_ATP_BIND_1"/>
    <property type="match status" value="1"/>
</dbReference>
<dbReference type="PROSITE" id="PS51194">
    <property type="entry name" value="HELICASE_CTER"/>
    <property type="match status" value="1"/>
</dbReference>
<dbReference type="PROSITE" id="PS51195">
    <property type="entry name" value="Q_MOTIF"/>
    <property type="match status" value="1"/>
</dbReference>
<proteinExistence type="evidence at protein level"/>
<keyword id="KW-0025">Alternative splicing</keyword>
<keyword id="KW-0067">ATP-binding</keyword>
<keyword id="KW-0175">Coiled coil</keyword>
<keyword id="KW-0347">Helicase</keyword>
<keyword id="KW-0378">Hydrolase</keyword>
<keyword id="KW-0547">Nucleotide-binding</keyword>
<keyword id="KW-0539">Nucleus</keyword>
<keyword id="KW-0597">Phosphoprotein</keyword>
<keyword id="KW-1185">Reference proteome</keyword>
<keyword id="KW-0694">RNA-binding</keyword>
<comment type="function">
    <text evidence="5">Helicase required for pre-mRNA splicing, cold-responsive gene regulation and cold tolerance.</text>
</comment>
<comment type="catalytic activity">
    <reaction>
        <text>ATP + H2O = ADP + phosphate + H(+)</text>
        <dbReference type="Rhea" id="RHEA:13065"/>
        <dbReference type="ChEBI" id="CHEBI:15377"/>
        <dbReference type="ChEBI" id="CHEBI:15378"/>
        <dbReference type="ChEBI" id="CHEBI:30616"/>
        <dbReference type="ChEBI" id="CHEBI:43474"/>
        <dbReference type="ChEBI" id="CHEBI:456216"/>
        <dbReference type="EC" id="3.6.4.13"/>
    </reaction>
</comment>
<comment type="subcellular location">
    <subcellularLocation>
        <location evidence="5">Nucleus</location>
    </subcellularLocation>
</comment>
<comment type="alternative products">
    <event type="alternative splicing"/>
    <isoform>
        <id>Q8H0U8-1</id>
        <name>1</name>
        <sequence type="displayed"/>
    </isoform>
    <isoform>
        <id>Q8H0U8-2</id>
        <name>2</name>
        <sequence type="described" ref="VSP_053521"/>
    </isoform>
</comment>
<comment type="induction">
    <text evidence="5">Up-regulated by cold.</text>
</comment>
<comment type="domain">
    <text>The Q motif is unique to and characteristic of the DEAD box family of RNA helicases and controls ATP binding and hydrolysis.</text>
</comment>
<comment type="similarity">
    <text evidence="6">Belongs to the DEAD box helicase family. DDX46/PRP5 subfamily.</text>
</comment>
<comment type="sequence caution" evidence="6">
    <conflict type="erroneous initiation">
        <sequence resource="EMBL-CDS" id="AAN72041"/>
    </conflict>
    <text>Truncated N-terminus.</text>
</comment>
<feature type="chain" id="PRO_0000239182" description="DEAD-box ATP-dependent RNA helicase 42">
    <location>
        <begin position="1"/>
        <end position="1166"/>
    </location>
</feature>
<feature type="domain" description="Helicase ATP-binding" evidence="2">
    <location>
        <begin position="560"/>
        <end position="738"/>
    </location>
</feature>
<feature type="domain" description="Helicase C-terminal" evidence="3">
    <location>
        <begin position="749"/>
        <end position="910"/>
    </location>
</feature>
<feature type="region of interest" description="Disordered" evidence="4">
    <location>
        <begin position="1"/>
        <end position="460"/>
    </location>
</feature>
<feature type="coiled-coil region" evidence="1">
    <location>
        <begin position="14"/>
        <end position="95"/>
    </location>
</feature>
<feature type="coiled-coil region" evidence="1">
    <location>
        <begin position="130"/>
        <end position="302"/>
    </location>
</feature>
<feature type="short sequence motif" description="Q motif">
    <location>
        <begin position="529"/>
        <end position="557"/>
    </location>
</feature>
<feature type="short sequence motif" description="DEAD box">
    <location>
        <begin position="686"/>
        <end position="689"/>
    </location>
</feature>
<feature type="compositionally biased region" description="Basic and acidic residues" evidence="4">
    <location>
        <begin position="1"/>
        <end position="12"/>
    </location>
</feature>
<feature type="compositionally biased region" description="Basic and acidic residues" evidence="4">
    <location>
        <begin position="21"/>
        <end position="45"/>
    </location>
</feature>
<feature type="compositionally biased region" description="Acidic residues" evidence="4">
    <location>
        <begin position="59"/>
        <end position="70"/>
    </location>
</feature>
<feature type="compositionally biased region" description="Basic residues" evidence="4">
    <location>
        <begin position="80"/>
        <end position="95"/>
    </location>
</feature>
<feature type="compositionally biased region" description="Acidic residues" evidence="4">
    <location>
        <begin position="101"/>
        <end position="110"/>
    </location>
</feature>
<feature type="compositionally biased region" description="Basic and acidic residues" evidence="4">
    <location>
        <begin position="111"/>
        <end position="206"/>
    </location>
</feature>
<feature type="compositionally biased region" description="Basic and acidic residues" evidence="4">
    <location>
        <begin position="224"/>
        <end position="314"/>
    </location>
</feature>
<feature type="compositionally biased region" description="Basic and acidic residues" evidence="4">
    <location>
        <begin position="344"/>
        <end position="357"/>
    </location>
</feature>
<feature type="compositionally biased region" description="Basic and acidic residues" evidence="4">
    <location>
        <begin position="416"/>
        <end position="426"/>
    </location>
</feature>
<feature type="binding site" evidence="2">
    <location>
        <begin position="573"/>
        <end position="580"/>
    </location>
    <ligand>
        <name>ATP</name>
        <dbReference type="ChEBI" id="CHEBI:30616"/>
    </ligand>
</feature>
<feature type="modified residue" description="Phosphoserine" evidence="7">
    <location>
        <position position="210"/>
    </location>
</feature>
<feature type="modified residue" description="Phosphoserine" evidence="7">
    <location>
        <position position="324"/>
    </location>
</feature>
<feature type="splice variant" id="VSP_053521" description="In isoform 2." evidence="6">
    <location>
        <begin position="1"/>
        <end position="338"/>
    </location>
</feature>
<feature type="mutagenesis site" description="Loss of ATPase activity." evidence="5">
    <original>E</original>
    <variation>A</variation>
    <location>
        <position position="687"/>
    </location>
</feature>
<feature type="mutagenesis site" description="In rcf1-1; loss of function and reduced cold tolerance." evidence="5">
    <original>G</original>
    <variation>R</variation>
    <location>
        <position position="808"/>
    </location>
</feature>
<feature type="sequence conflict" description="In Ref. 3; AAN72041." evidence="6" ref="3">
    <original>A</original>
    <variation>D</variation>
    <location>
        <position position="894"/>
    </location>
</feature>
<sequence>MEVEKSKYRSEDLDVVEEEADLKKSRRDRDRSNERKKDKGSEKRREKDRRKKRVKSSDSEDDYDRDDDEEREKRKEKERERRRRDKDRVKRRSERRKSSDSEDDVEEEDERDKRRVNEKERGHREHERDRGKDRKRDREREERKDKEREREKDRERREREREEREKERVKERERREREDGERDRREREKERGSRRNRERERSREVGNEESDDDVKRDLKRRRKEGGERKEKEREKSVGRSSRHEDSPKRKSVEDNGEKKEKKTREEELEDEQKKLDEEVEKRRRRVQEWQELKRKKEEAESESKGDADGNEPKAGKAWTLEGESDDEEGHPEEKSETEMDVDEETKPENDGDAKMVDLENETAATVSESGGDGAVDEEEIDPLDAFMNTMVLPEVEKFCNGAPPPAVNDGTLDSKMNGKESGDRPKKGFNKALGRIIQGEDSDSDYSEPKNDDDPSLDEDDEEFMKRVKKTKAEKLSLVDHSKIEYEPFRKNFYIEVKDISRMTQEEVNTYRKELELKVHGKDVPRPIKFWHQTGLTSKILDTMKKLNYEKPMPIQTQALPIIMSGRDCIGVAKTGSGKTLGFVLPMLRHIKDQPPVEAGDGPIGLVMAPTRELVQQIHSDIRKFSKPLGIRCVPVYGGSGVAQQISELKRGTEIVVCTPGRMIDILCTSSGKITNLRRVTFLVMDEADRMFDMGFEPQITRIIQNIRPERQTVLFSATFPRQVETLARKVLNKPVEIQVGGRSVVNKDITQLVEVRPESDRFLRLLELLGEWSEKGKILVFVQSQEKCDALYRDMIKSSYPCLSLHGGKDQTDRESTISDFKNDVCNLLIATSVAARGLDVKELELVVNFDAPNHYEDYVHRVGRTGRAGRKGCAVTFISEDDAKYAPDLVKALELSEQPVPDDLKALADGFMVKVKQGIEQAHGTGYGGSGFKFNEEEEEVRKAAKKAQAKEYGFEEDKSDSEDENDVVRKAGGGEISQQQATFAQIAAIAAAAKAAAAAPVSAPVTANQLLANGGGLAAMPGVLPVTVPTLPSEGAGRAAAMVAAMNLQHNLAKIQADAMPEHYEAELEINDFPQNARWKVTHKETLGPISEWTGAAITTRGQFYPTGRIPGPGERKLYLFIEGPSEKSVKHAKAELKRVLEDITNQAMSSLPGGASGRYSVL</sequence>
<accession>Q8H0U8</accession>
<accession>A8MQH2</accession>
<accession>Q9SYP6</accession>
<protein>
    <recommendedName>
        <fullName>DEAD-box ATP-dependent RNA helicase 42</fullName>
        <ecNumber>3.6.4.13</ecNumber>
    </recommendedName>
    <alternativeName>
        <fullName>DEAD-box RNA helicase RCF1</fullName>
    </alternativeName>
    <alternativeName>
        <fullName>REGULATOR OF CBF GENE EXPRESSION 1</fullName>
    </alternativeName>
</protein>